<proteinExistence type="inferred from homology"/>
<evidence type="ECO:0000250" key="1"/>
<evidence type="ECO:0000255" key="2"/>
<evidence type="ECO:0000305" key="3"/>
<comment type="function">
    <text evidence="1">Core subunit of the mitochondrial membrane respiratory chain NADH dehydrogenase (Complex I) that is believed to belong to the minimal assembly required for catalysis. Complex I functions in the transfer of electrons from NADH to the respiratory chain. The immediate electron acceptor for the enzyme is believed to be ubiquinone (By similarity).</text>
</comment>
<comment type="catalytic activity">
    <reaction>
        <text>a ubiquinone + NADH + 5 H(+)(in) = a ubiquinol + NAD(+) + 4 H(+)(out)</text>
        <dbReference type="Rhea" id="RHEA:29091"/>
        <dbReference type="Rhea" id="RHEA-COMP:9565"/>
        <dbReference type="Rhea" id="RHEA-COMP:9566"/>
        <dbReference type="ChEBI" id="CHEBI:15378"/>
        <dbReference type="ChEBI" id="CHEBI:16389"/>
        <dbReference type="ChEBI" id="CHEBI:17976"/>
        <dbReference type="ChEBI" id="CHEBI:57540"/>
        <dbReference type="ChEBI" id="CHEBI:57945"/>
        <dbReference type="EC" id="7.1.1.2"/>
    </reaction>
</comment>
<comment type="subcellular location">
    <subcellularLocation>
        <location evidence="1">Mitochondrion membrane</location>
        <topology evidence="1">Multi-pass membrane protein</topology>
    </subcellularLocation>
</comment>
<comment type="similarity">
    <text evidence="3">Belongs to the complex I subunit 4L family.</text>
</comment>
<keyword id="KW-0249">Electron transport</keyword>
<keyword id="KW-0472">Membrane</keyword>
<keyword id="KW-0496">Mitochondrion</keyword>
<keyword id="KW-0520">NAD</keyword>
<keyword id="KW-0679">Respiratory chain</keyword>
<keyword id="KW-1278">Translocase</keyword>
<keyword id="KW-0812">Transmembrane</keyword>
<keyword id="KW-1133">Transmembrane helix</keyword>
<keyword id="KW-0813">Transport</keyword>
<keyword id="KW-0830">Ubiquinone</keyword>
<reference key="1">
    <citation type="journal article" date="1989" name="J. Biol. Chem.">
        <title>The complete nucleotide sequence, gene organization, and genetic code of the mitochondrial genome of Paracentrotus lividus.</title>
        <authorList>
            <person name="Cantatore P."/>
            <person name="Roberti M."/>
            <person name="Rainaldi G."/>
            <person name="Gadaleta M.N."/>
            <person name="Saccone C."/>
        </authorList>
    </citation>
    <scope>NUCLEOTIDE SEQUENCE [GENOMIC DNA]</scope>
</reference>
<reference key="2">
    <citation type="journal article" date="1987" name="Gene">
        <title>A novel gene order in the Paracentrotus lividus mitochondrial genome.</title>
        <authorList>
            <person name="Cantatore P."/>
            <person name="Roberti M."/>
            <person name="Morisco P."/>
            <person name="Rainaldi G."/>
            <person name="Gadaleta M.N."/>
            <person name="Saccone C."/>
        </authorList>
    </citation>
    <scope>NUCLEOTIDE SEQUENCE [GENOMIC DNA]</scope>
</reference>
<dbReference type="EC" id="7.1.1.2"/>
<dbReference type="EMBL" id="J04815">
    <property type="protein sequence ID" value="AAA68136.2"/>
    <property type="molecule type" value="Genomic_DNA"/>
</dbReference>
<dbReference type="RefSeq" id="NP_008124.2">
    <property type="nucleotide sequence ID" value="NC_001572.1"/>
</dbReference>
<dbReference type="SMR" id="P12773"/>
<dbReference type="GeneID" id="807713"/>
<dbReference type="CTD" id="4539"/>
<dbReference type="GO" id="GO:0031966">
    <property type="term" value="C:mitochondrial membrane"/>
    <property type="evidence" value="ECO:0007669"/>
    <property type="project" value="UniProtKB-SubCell"/>
</dbReference>
<dbReference type="GO" id="GO:0030964">
    <property type="term" value="C:NADH dehydrogenase complex"/>
    <property type="evidence" value="ECO:0007669"/>
    <property type="project" value="TreeGrafter"/>
</dbReference>
<dbReference type="GO" id="GO:0008137">
    <property type="term" value="F:NADH dehydrogenase (ubiquinone) activity"/>
    <property type="evidence" value="ECO:0007669"/>
    <property type="project" value="UniProtKB-EC"/>
</dbReference>
<dbReference type="GO" id="GO:0042773">
    <property type="term" value="P:ATP synthesis coupled electron transport"/>
    <property type="evidence" value="ECO:0007669"/>
    <property type="project" value="InterPro"/>
</dbReference>
<dbReference type="Gene3D" id="1.10.287.3510">
    <property type="match status" value="1"/>
</dbReference>
<dbReference type="InterPro" id="IPR001133">
    <property type="entry name" value="NADH_UbQ_OxRdtase_chain4L/K"/>
</dbReference>
<dbReference type="InterPro" id="IPR039428">
    <property type="entry name" value="NUOK/Mnh_C1-like"/>
</dbReference>
<dbReference type="PANTHER" id="PTHR11434:SF0">
    <property type="entry name" value="NADH-UBIQUINONE OXIDOREDUCTASE CHAIN 4L"/>
    <property type="match status" value="1"/>
</dbReference>
<dbReference type="PANTHER" id="PTHR11434">
    <property type="entry name" value="NADH-UBIQUINONE OXIDOREDUCTASE SUBUNIT ND4L"/>
    <property type="match status" value="1"/>
</dbReference>
<dbReference type="Pfam" id="PF00420">
    <property type="entry name" value="Oxidored_q2"/>
    <property type="match status" value="1"/>
</dbReference>
<name>NU4LM_PARLI</name>
<gene>
    <name type="primary">ND4L</name>
</gene>
<geneLocation type="mitochondrion"/>
<organism>
    <name type="scientific">Paracentrotus lividus</name>
    <name type="common">Common sea urchin</name>
    <dbReference type="NCBI Taxonomy" id="7656"/>
    <lineage>
        <taxon>Eukaryota</taxon>
        <taxon>Metazoa</taxon>
        <taxon>Echinodermata</taxon>
        <taxon>Eleutherozoa</taxon>
        <taxon>Echinozoa</taxon>
        <taxon>Echinoidea</taxon>
        <taxon>Euechinoidea</taxon>
        <taxon>Echinacea</taxon>
        <taxon>Camarodonta</taxon>
        <taxon>Echinidea</taxon>
        <taxon>Echinidae</taxon>
        <taxon>Paracentrotus</taxon>
    </lineage>
</organism>
<sequence>MALLIIILSMFYLGLMGILLNRLHFLSILLCLELLLISLFIGIATWNTSNSIPQNTTFNLLLLTLSACEASIGLSLMVALSRTHSSDLVASLSLLQY</sequence>
<accession>P12773</accession>
<protein>
    <recommendedName>
        <fullName>NADH-ubiquinone oxidoreductase chain 4L</fullName>
        <ecNumber>7.1.1.2</ecNumber>
    </recommendedName>
    <alternativeName>
        <fullName>NADH dehydrogenase subunit 4L</fullName>
    </alternativeName>
</protein>
<feature type="chain" id="PRO_0000118466" description="NADH-ubiquinone oxidoreductase chain 4L">
    <location>
        <begin position="1"/>
        <end position="97"/>
    </location>
</feature>
<feature type="transmembrane region" description="Helical" evidence="2">
    <location>
        <begin position="1"/>
        <end position="21"/>
    </location>
</feature>
<feature type="transmembrane region" description="Helical" evidence="2">
    <location>
        <begin position="23"/>
        <end position="43"/>
    </location>
</feature>
<feature type="transmembrane region" description="Helical" evidence="2">
    <location>
        <begin position="60"/>
        <end position="80"/>
    </location>
</feature>